<accession>Q0B628</accession>
<evidence type="ECO:0000250" key="1">
    <source>
        <dbReference type="UniProtKB" id="Q6P587"/>
    </source>
</evidence>
<evidence type="ECO:0000305" key="2"/>
<feature type="chain" id="PRO_0000371514" description="Putative hydrolase Bamb_4846">
    <location>
        <begin position="1"/>
        <end position="282"/>
    </location>
</feature>
<feature type="binding site" evidence="1">
    <location>
        <position position="124"/>
    </location>
    <ligand>
        <name>Mg(2+)</name>
        <dbReference type="ChEBI" id="CHEBI:18420"/>
    </ligand>
</feature>
<feature type="binding site" evidence="1">
    <location>
        <position position="126"/>
    </location>
    <ligand>
        <name>Mg(2+)</name>
        <dbReference type="ChEBI" id="CHEBI:18420"/>
    </ligand>
</feature>
<feature type="binding site" evidence="1">
    <location>
        <position position="155"/>
    </location>
    <ligand>
        <name>Mg(2+)</name>
        <dbReference type="ChEBI" id="CHEBI:18420"/>
    </ligand>
</feature>
<name>UGL_BURCM</name>
<gene>
    <name type="ordered locus">Bamb_4846</name>
</gene>
<organism>
    <name type="scientific">Burkholderia ambifaria (strain ATCC BAA-244 / DSM 16087 / CCUG 44356 / LMG 19182 / AMMD)</name>
    <name type="common">Burkholderia cepacia (strain AMMD)</name>
    <dbReference type="NCBI Taxonomy" id="339670"/>
    <lineage>
        <taxon>Bacteria</taxon>
        <taxon>Pseudomonadati</taxon>
        <taxon>Pseudomonadota</taxon>
        <taxon>Betaproteobacteria</taxon>
        <taxon>Burkholderiales</taxon>
        <taxon>Burkholderiaceae</taxon>
        <taxon>Burkholderia</taxon>
        <taxon>Burkholderia cepacia complex</taxon>
    </lineage>
</organism>
<keyword id="KW-0378">Hydrolase</keyword>
<keyword id="KW-0460">Magnesium</keyword>
<keyword id="KW-0479">Metal-binding</keyword>
<proteinExistence type="inferred from homology"/>
<dbReference type="EC" id="3.-.-.-"/>
<dbReference type="EMBL" id="CP000441">
    <property type="protein sequence ID" value="ABI90395.1"/>
    <property type="molecule type" value="Genomic_DNA"/>
</dbReference>
<dbReference type="RefSeq" id="WP_011659790.1">
    <property type="nucleotide sequence ID" value="NC_008391.1"/>
</dbReference>
<dbReference type="SMR" id="Q0B628"/>
<dbReference type="GeneID" id="93087794"/>
<dbReference type="KEGG" id="bam:Bamb_4846"/>
<dbReference type="PATRIC" id="fig|339670.21.peg.5207"/>
<dbReference type="eggNOG" id="COG0179">
    <property type="taxonomic scope" value="Bacteria"/>
</dbReference>
<dbReference type="Proteomes" id="UP000000662">
    <property type="component" value="Chromosome 2"/>
</dbReference>
<dbReference type="GO" id="GO:0016787">
    <property type="term" value="F:hydrolase activity"/>
    <property type="evidence" value="ECO:0007669"/>
    <property type="project" value="UniProtKB-KW"/>
</dbReference>
<dbReference type="GO" id="GO:0046872">
    <property type="term" value="F:metal ion binding"/>
    <property type="evidence" value="ECO:0007669"/>
    <property type="project" value="UniProtKB-KW"/>
</dbReference>
<dbReference type="GO" id="GO:0050385">
    <property type="term" value="F:ureidoglycolate lyase activity"/>
    <property type="evidence" value="ECO:0007669"/>
    <property type="project" value="UniProtKB-EC"/>
</dbReference>
<dbReference type="GO" id="GO:0019628">
    <property type="term" value="P:urate catabolic process"/>
    <property type="evidence" value="ECO:0007669"/>
    <property type="project" value="UniProtKB-UniPathway"/>
</dbReference>
<dbReference type="FunFam" id="3.90.850.10:FF:000002">
    <property type="entry name" value="2-hydroxyhepta-2,4-diene-1,7-dioate isomerase"/>
    <property type="match status" value="1"/>
</dbReference>
<dbReference type="Gene3D" id="3.90.850.10">
    <property type="entry name" value="Fumarylacetoacetase-like, C-terminal domain"/>
    <property type="match status" value="1"/>
</dbReference>
<dbReference type="InterPro" id="IPR051121">
    <property type="entry name" value="FAH"/>
</dbReference>
<dbReference type="InterPro" id="IPR011234">
    <property type="entry name" value="Fumarylacetoacetase-like_C"/>
</dbReference>
<dbReference type="InterPro" id="IPR036663">
    <property type="entry name" value="Fumarylacetoacetase_C_sf"/>
</dbReference>
<dbReference type="PANTHER" id="PTHR42796:SF4">
    <property type="entry name" value="FUMARYLACETOACETATE HYDROLASE DOMAIN-CONTAINING PROTEIN 2A"/>
    <property type="match status" value="1"/>
</dbReference>
<dbReference type="PANTHER" id="PTHR42796">
    <property type="entry name" value="FUMARYLACETOACETATE HYDROLASE DOMAIN-CONTAINING PROTEIN 2A-RELATED"/>
    <property type="match status" value="1"/>
</dbReference>
<dbReference type="Pfam" id="PF01557">
    <property type="entry name" value="FAA_hydrolase"/>
    <property type="match status" value="1"/>
</dbReference>
<dbReference type="SUPFAM" id="SSF56529">
    <property type="entry name" value="FAH"/>
    <property type="match status" value="1"/>
</dbReference>
<sequence length="282" mass="30236">MKLLRYGPSGQEKPGILDANGRIRDLSAHVPDLAGDALSDAGLTRLRAIDPATLPLVSGEPRIGACVGRVGKFIGIGLNYADHAAEAGMPVPKEPVVFGKWTSSICGPNDGIDIPKGSVKTDWEVELGVVIGTTCKDVDEARALDYVAGYCVVNDVSEREWQIERGGQWDKGKGFDTFGPIGPWLVTRDEVPDPQRLDLWLEVDGHRYQNGNTRTMVFTVAQLVAYLSTCMTLQPGDVITTGTPPGVGMGIKPSPVFLKAGQTVRLGIDGLGEQLQSTRNAR</sequence>
<comment type="cofactor">
    <cofactor evidence="1">
        <name>Mg(2+)</name>
        <dbReference type="ChEBI" id="CHEBI:18420"/>
    </cofactor>
</comment>
<comment type="similarity">
    <text evidence="2">Belongs to the FAH family.</text>
</comment>
<protein>
    <recommendedName>
        <fullName evidence="2">Putative hydrolase Bamb_4846</fullName>
        <ecNumber>3.-.-.-</ecNumber>
    </recommendedName>
</protein>
<reference key="1">
    <citation type="submission" date="2006-08" db="EMBL/GenBank/DDBJ databases">
        <title>Complete sequence of chromosome 2 of Burkholderia cepacia AMMD.</title>
        <authorList>
            <person name="Copeland A."/>
            <person name="Lucas S."/>
            <person name="Lapidus A."/>
            <person name="Barry K."/>
            <person name="Detter J.C."/>
            <person name="Glavina del Rio T."/>
            <person name="Hammon N."/>
            <person name="Israni S."/>
            <person name="Pitluck S."/>
            <person name="Bruce D."/>
            <person name="Chain P."/>
            <person name="Malfatti S."/>
            <person name="Shin M."/>
            <person name="Vergez L."/>
            <person name="Schmutz J."/>
            <person name="Larimer F."/>
            <person name="Land M."/>
            <person name="Hauser L."/>
            <person name="Kyrpides N."/>
            <person name="Kim E."/>
            <person name="Parke J."/>
            <person name="Coenye T."/>
            <person name="Konstantinidis K."/>
            <person name="Ramette A."/>
            <person name="Tiedje J."/>
            <person name="Richardson P."/>
        </authorList>
    </citation>
    <scope>NUCLEOTIDE SEQUENCE [LARGE SCALE GENOMIC DNA]</scope>
    <source>
        <strain>ATCC BAA-244 / DSM 16087 / CCUG 44356 / LMG 19182 / AMMD</strain>
    </source>
</reference>